<sequence>MSSEDLSAPGPSAPDSSFTGPSTKFELERETELRLEVEGTDPVRVELVSGLAEVFGTELTRNKKYTFPPGSRAAIFTWHGCTVQLWGSPDVAYVSRDTPMLLYLNTQVGLEQMRAQAEREGERGPRVLVAGPSDVGKSTLCRLLLNYAVRRGRRPTLVELDVGQGSVSVPGTVGALCVERPADVEEGFSAQAPLVYHFGSTTPGTNIKLYNKLTSRLAHVFNLRCDSNRRASVSGCLINTCGWVKGSGYQALIHAASAFEVDVVLVLDQERLYNDLLRDLPHFVRTLLLPKSGGASERSKECRRESRDQRVREYFYGPRGSLYPHAFEIKFSEVRVYKVGAPSIPDSCLPLGMSQEDNQLKLVPVTPGRDMAHHLLSVVPLDGGGAEEGIEERSVAGFIVITGVDTERQTLTVLSPAPRPLPKCVLLIMDIRFMDLK</sequence>
<gene>
    <name type="primary">clp1</name>
    <name type="ORF">TEgg012h01.1</name>
</gene>
<organism>
    <name type="scientific">Xenopus tropicalis</name>
    <name type="common">Western clawed frog</name>
    <name type="synonym">Silurana tropicalis</name>
    <dbReference type="NCBI Taxonomy" id="8364"/>
    <lineage>
        <taxon>Eukaryota</taxon>
        <taxon>Metazoa</taxon>
        <taxon>Chordata</taxon>
        <taxon>Craniata</taxon>
        <taxon>Vertebrata</taxon>
        <taxon>Euteleostomi</taxon>
        <taxon>Amphibia</taxon>
        <taxon>Batrachia</taxon>
        <taxon>Anura</taxon>
        <taxon>Pipoidea</taxon>
        <taxon>Pipidae</taxon>
        <taxon>Xenopodinae</taxon>
        <taxon>Xenopus</taxon>
        <taxon>Silurana</taxon>
    </lineage>
</organism>
<proteinExistence type="evidence at transcript level"/>
<protein>
    <recommendedName>
        <fullName evidence="2">Polyribonucleotide 5'-hydroxyl-kinase Clp1</fullName>
        <ecNumber evidence="2">2.7.1.78</ecNumber>
    </recommendedName>
    <alternativeName>
        <fullName evidence="2">Polyadenylation factor Clp1</fullName>
    </alternativeName>
    <alternativeName>
        <fullName evidence="2">Polynucleotide kinase Clp1</fullName>
    </alternativeName>
    <alternativeName>
        <fullName evidence="2">Pre-mRNA cleavage complex II protein Clp1</fullName>
    </alternativeName>
</protein>
<keyword id="KW-0067">ATP-binding</keyword>
<keyword id="KW-0418">Kinase</keyword>
<keyword id="KW-0507">mRNA processing</keyword>
<keyword id="KW-0547">Nucleotide-binding</keyword>
<keyword id="KW-0539">Nucleus</keyword>
<keyword id="KW-1185">Reference proteome</keyword>
<keyword id="KW-0808">Transferase</keyword>
<keyword id="KW-0819">tRNA processing</keyword>
<dbReference type="EC" id="2.7.1.78" evidence="2"/>
<dbReference type="EMBL" id="CR848531">
    <property type="protein sequence ID" value="CAJ83686.1"/>
    <property type="molecule type" value="mRNA"/>
</dbReference>
<dbReference type="EMBL" id="BC080880">
    <property type="protein sequence ID" value="AAH80880.1"/>
    <property type="molecule type" value="mRNA"/>
</dbReference>
<dbReference type="RefSeq" id="NP_001008002.1">
    <property type="nucleotide sequence ID" value="NM_001008001.1"/>
</dbReference>
<dbReference type="RefSeq" id="XP_017950844.1">
    <property type="nucleotide sequence ID" value="XM_018095355.1"/>
</dbReference>
<dbReference type="SMR" id="Q66JK4"/>
<dbReference type="FunCoup" id="Q66JK4">
    <property type="interactions" value="3189"/>
</dbReference>
<dbReference type="STRING" id="8364.ENSXETP00000009421"/>
<dbReference type="PaxDb" id="8364-ENSXETP00000015427"/>
<dbReference type="DNASU" id="493364"/>
<dbReference type="GeneID" id="493364"/>
<dbReference type="KEGG" id="xtr:493364"/>
<dbReference type="AGR" id="Xenbase:XB-GENE-1008970"/>
<dbReference type="CTD" id="10978"/>
<dbReference type="Xenbase" id="XB-GENE-1008970">
    <property type="gene designation" value="clp1"/>
</dbReference>
<dbReference type="eggNOG" id="KOG2749">
    <property type="taxonomic scope" value="Eukaryota"/>
</dbReference>
<dbReference type="HOGENOM" id="CLU_018195_1_0_1"/>
<dbReference type="InParanoid" id="Q66JK4"/>
<dbReference type="OMA" id="VQYVNCH"/>
<dbReference type="OrthoDB" id="258143at2759"/>
<dbReference type="PhylomeDB" id="Q66JK4"/>
<dbReference type="TreeFam" id="TF105795"/>
<dbReference type="Proteomes" id="UP000008143">
    <property type="component" value="Chromosome 7"/>
</dbReference>
<dbReference type="Bgee" id="ENSXETG00000007088">
    <property type="expression patterns" value="Expressed in early embryo and 14 other cell types or tissues"/>
</dbReference>
<dbReference type="GO" id="GO:0005849">
    <property type="term" value="C:mRNA cleavage factor complex"/>
    <property type="evidence" value="ECO:0007669"/>
    <property type="project" value="UniProtKB-UniRule"/>
</dbReference>
<dbReference type="GO" id="GO:0000214">
    <property type="term" value="C:tRNA-intron endonuclease complex"/>
    <property type="evidence" value="ECO:0000250"/>
    <property type="project" value="UniProtKB"/>
</dbReference>
<dbReference type="GO" id="GO:0005524">
    <property type="term" value="F:ATP binding"/>
    <property type="evidence" value="ECO:0007669"/>
    <property type="project" value="UniProtKB-UniRule"/>
</dbReference>
<dbReference type="GO" id="GO:0046404">
    <property type="term" value="F:ATP-dependent polydeoxyribonucleotide 5'-hydroxyl-kinase activity"/>
    <property type="evidence" value="ECO:0007669"/>
    <property type="project" value="UniProtKB-UniRule"/>
</dbReference>
<dbReference type="GO" id="GO:0051736">
    <property type="term" value="F:ATP-dependent polyribonucleotide 5'-hydroxyl-kinase activity"/>
    <property type="evidence" value="ECO:0007669"/>
    <property type="project" value="UniProtKB-UniRule"/>
</dbReference>
<dbReference type="GO" id="GO:0021695">
    <property type="term" value="P:cerebellar cortex development"/>
    <property type="evidence" value="ECO:0000250"/>
    <property type="project" value="UniProtKB"/>
</dbReference>
<dbReference type="GO" id="GO:0098795">
    <property type="term" value="P:global gene silencing by mRNA cleavage"/>
    <property type="evidence" value="ECO:0000250"/>
    <property type="project" value="UniProtKB"/>
</dbReference>
<dbReference type="GO" id="GO:0031124">
    <property type="term" value="P:mRNA 3'-end processing"/>
    <property type="evidence" value="ECO:0007669"/>
    <property type="project" value="UniProtKB-UniRule"/>
</dbReference>
<dbReference type="GO" id="GO:0070922">
    <property type="term" value="P:RISC complex assembly"/>
    <property type="evidence" value="ECO:0000250"/>
    <property type="project" value="UniProtKB"/>
</dbReference>
<dbReference type="GO" id="GO:0006388">
    <property type="term" value="P:tRNA splicing, via endonucleolytic cleavage and ligation"/>
    <property type="evidence" value="ECO:0000250"/>
    <property type="project" value="UniProtKB"/>
</dbReference>
<dbReference type="FunFam" id="2.40.30.330:FF:000001">
    <property type="entry name" value="Protein CLP1 homolog"/>
    <property type="match status" value="1"/>
</dbReference>
<dbReference type="FunFam" id="3.40.50.300:FF:000454">
    <property type="entry name" value="Protein CLP1 homolog"/>
    <property type="match status" value="1"/>
</dbReference>
<dbReference type="FunFam" id="2.60.120.1030:FF:000001">
    <property type="entry name" value="Protein CLP1 homolog 5"/>
    <property type="match status" value="1"/>
</dbReference>
<dbReference type="Gene3D" id="2.60.120.1030">
    <property type="entry name" value="Clp1, DNA binding domain"/>
    <property type="match status" value="1"/>
</dbReference>
<dbReference type="Gene3D" id="3.40.50.300">
    <property type="entry name" value="P-loop containing nucleotide triphosphate hydrolases"/>
    <property type="match status" value="1"/>
</dbReference>
<dbReference type="Gene3D" id="2.40.30.330">
    <property type="entry name" value="Pre-mRNA cleavage complex subunit Clp1, C-terminal domain"/>
    <property type="match status" value="1"/>
</dbReference>
<dbReference type="HAMAP" id="MF_03035">
    <property type="entry name" value="Clp1"/>
    <property type="match status" value="1"/>
</dbReference>
<dbReference type="InterPro" id="IPR028606">
    <property type="entry name" value="Clp1"/>
</dbReference>
<dbReference type="InterPro" id="IPR045116">
    <property type="entry name" value="Clp1/Grc3"/>
</dbReference>
<dbReference type="InterPro" id="IPR010655">
    <property type="entry name" value="Clp1_C"/>
</dbReference>
<dbReference type="InterPro" id="IPR038238">
    <property type="entry name" value="Clp1_C_sf"/>
</dbReference>
<dbReference type="InterPro" id="IPR032324">
    <property type="entry name" value="Clp1_N"/>
</dbReference>
<dbReference type="InterPro" id="IPR038239">
    <property type="entry name" value="Clp1_N_sf"/>
</dbReference>
<dbReference type="InterPro" id="IPR032319">
    <property type="entry name" value="CLP1_P"/>
</dbReference>
<dbReference type="InterPro" id="IPR027417">
    <property type="entry name" value="P-loop_NTPase"/>
</dbReference>
<dbReference type="PANTHER" id="PTHR12755">
    <property type="entry name" value="CLEAVAGE/POLYADENYLATION FACTOR IA SUBUNIT CLP1P"/>
    <property type="match status" value="1"/>
</dbReference>
<dbReference type="PANTHER" id="PTHR12755:SF6">
    <property type="entry name" value="POLYRIBONUCLEOTIDE 5'-HYDROXYL-KINASE CLP1"/>
    <property type="match status" value="1"/>
</dbReference>
<dbReference type="Pfam" id="PF06807">
    <property type="entry name" value="Clp1"/>
    <property type="match status" value="1"/>
</dbReference>
<dbReference type="Pfam" id="PF16573">
    <property type="entry name" value="CLP1_N"/>
    <property type="match status" value="1"/>
</dbReference>
<dbReference type="Pfam" id="PF16575">
    <property type="entry name" value="CLP1_P"/>
    <property type="match status" value="1"/>
</dbReference>
<dbReference type="SUPFAM" id="SSF52540">
    <property type="entry name" value="P-loop containing nucleoside triphosphate hydrolases"/>
    <property type="match status" value="2"/>
</dbReference>
<evidence type="ECO:0000250" key="1"/>
<evidence type="ECO:0000255" key="2">
    <source>
        <dbReference type="HAMAP-Rule" id="MF_03035"/>
    </source>
</evidence>
<evidence type="ECO:0000256" key="3">
    <source>
        <dbReference type="SAM" id="MobiDB-lite"/>
    </source>
</evidence>
<feature type="chain" id="PRO_0000375171" description="Polyribonucleotide 5'-hydroxyl-kinase Clp1">
    <location>
        <begin position="1"/>
        <end position="437"/>
    </location>
</feature>
<feature type="region of interest" description="Disordered" evidence="3">
    <location>
        <begin position="1"/>
        <end position="25"/>
    </location>
</feature>
<feature type="binding site" evidence="2">
    <location>
        <position position="32"/>
    </location>
    <ligand>
        <name>ATP</name>
        <dbReference type="ChEBI" id="CHEBI:30616"/>
    </ligand>
</feature>
<feature type="binding site" evidence="2">
    <location>
        <position position="72"/>
    </location>
    <ligand>
        <name>ATP</name>
        <dbReference type="ChEBI" id="CHEBI:30616"/>
    </ligand>
</feature>
<feature type="binding site" evidence="2">
    <location>
        <begin position="134"/>
        <end position="139"/>
    </location>
    <ligand>
        <name>ATP</name>
        <dbReference type="ChEBI" id="CHEBI:30616"/>
    </ligand>
</feature>
<name>CLP1_XENTR</name>
<reference key="1">
    <citation type="submission" date="2006-10" db="EMBL/GenBank/DDBJ databases">
        <authorList>
            <consortium name="Sanger Xenopus tropicalis EST/cDNA project"/>
        </authorList>
    </citation>
    <scope>NUCLEOTIDE SEQUENCE [LARGE SCALE MRNA]</scope>
    <source>
        <tissue>Egg</tissue>
    </source>
</reference>
<reference key="2">
    <citation type="submission" date="2004-08" db="EMBL/GenBank/DDBJ databases">
        <authorList>
            <consortium name="NIH - Xenopus Gene Collection (XGC) project"/>
        </authorList>
    </citation>
    <scope>NUCLEOTIDE SEQUENCE [LARGE SCALE MRNA]</scope>
    <source>
        <tissue>Embryo</tissue>
    </source>
</reference>
<accession>Q66JK4</accession>
<comment type="function">
    <text evidence="1">Polynucleotide kinase that can phosphorylate the 5'-hydroxyl groups of double-stranded RNA (dsRNA), single-stranded RNA (ssRNA), double stranded DNA (dsDNA) and double-stranded DNA:RNA hybrids. dsRNA is phosphorylated more efficiently than dsDNA, and the RNA component of a DNA:RNA hybrid is phosphorylated more efficiently than the DNA component. Plays a role in both tRNA splicing and mRNA 3'-end formation. Component of the tRNA splicing endonuclease complex: phosphorylates the 5'-terminus of the tRNA 3'-exon during tRNA splicing; this phosphorylation event is a prerequisite for the subsequent ligation of the two exon halves and the production of a mature tRNA. Its role in tRNA splicing and maturation is required for cerebellar development. Component of the pre-mRNA cleavage complex II (CF-II), which seems to be required for mRNA 3'-end formation. Also phosphorylates the 5'-terminus of exogenously introduced short interfering RNAs (siRNAs), which is a necessary prerequisite for their incorporation into the RNA-induced silencing complex (RISC). However, endogenous siRNAs and microRNAs (miRNAs) that are produced by the cleavage of dsRNA precursors by dicer1 already contain a 5'-phosphate group, so this protein may be dispensible for normal RNA-mediated gene silencing (By similarity).</text>
</comment>
<comment type="catalytic activity">
    <reaction evidence="2">
        <text>a 5'-end dephospho-2'-deoxyribonucleoside-DNA + ATP = a 5'-end 5'-phospho-2'-deoxyribonucleoside-DNA + ADP + H(+)</text>
        <dbReference type="Rhea" id="RHEA:15669"/>
        <dbReference type="Rhea" id="RHEA-COMP:13180"/>
        <dbReference type="Rhea" id="RHEA-COMP:13184"/>
        <dbReference type="ChEBI" id="CHEBI:15378"/>
        <dbReference type="ChEBI" id="CHEBI:30616"/>
        <dbReference type="ChEBI" id="CHEBI:136412"/>
        <dbReference type="ChEBI" id="CHEBI:136416"/>
        <dbReference type="ChEBI" id="CHEBI:456216"/>
        <dbReference type="EC" id="2.7.1.78"/>
    </reaction>
</comment>
<comment type="catalytic activity">
    <reaction evidence="2">
        <text>a 5'-end dephospho-ribonucleoside-RNA + ATP = a 5'-end 5'-phospho-ribonucleoside-RNA + ADP + H(+)</text>
        <dbReference type="Rhea" id="RHEA:54580"/>
        <dbReference type="Rhea" id="RHEA-COMP:13936"/>
        <dbReference type="Rhea" id="RHEA-COMP:15179"/>
        <dbReference type="ChEBI" id="CHEBI:15378"/>
        <dbReference type="ChEBI" id="CHEBI:30616"/>
        <dbReference type="ChEBI" id="CHEBI:138282"/>
        <dbReference type="ChEBI" id="CHEBI:138284"/>
        <dbReference type="ChEBI" id="CHEBI:456216"/>
        <dbReference type="EC" id="2.7.1.78"/>
    </reaction>
</comment>
<comment type="subunit">
    <text evidence="2">Component of the tRNA splicing endonuclease complex. Component of pre-mRNA cleavage complex II (CF-II).</text>
</comment>
<comment type="subcellular location">
    <subcellularLocation>
        <location evidence="2">Nucleus</location>
    </subcellularLocation>
</comment>
<comment type="similarity">
    <text evidence="2">Belongs to the Clp1 family. Clp1 subfamily.</text>
</comment>